<gene>
    <name type="primary">CCT7</name>
</gene>
<reference key="1">
    <citation type="submission" date="2005-12" db="EMBL/GenBank/DDBJ databases">
        <authorList>
            <consortium name="NIH - Mammalian Gene Collection (MGC) project"/>
        </authorList>
    </citation>
    <scope>NUCLEOTIDE SEQUENCE [LARGE SCALE MRNA]</scope>
    <source>
        <strain>Crossbred X Angus</strain>
        <tissue>Liver</tissue>
    </source>
</reference>
<organism>
    <name type="scientific">Bos taurus</name>
    <name type="common">Bovine</name>
    <dbReference type="NCBI Taxonomy" id="9913"/>
    <lineage>
        <taxon>Eukaryota</taxon>
        <taxon>Metazoa</taxon>
        <taxon>Chordata</taxon>
        <taxon>Craniata</taxon>
        <taxon>Vertebrata</taxon>
        <taxon>Euteleostomi</taxon>
        <taxon>Mammalia</taxon>
        <taxon>Eutheria</taxon>
        <taxon>Laurasiatheria</taxon>
        <taxon>Artiodactyla</taxon>
        <taxon>Ruminantia</taxon>
        <taxon>Pecora</taxon>
        <taxon>Bovidae</taxon>
        <taxon>Bovinae</taxon>
        <taxon>Bos</taxon>
    </lineage>
</organism>
<proteinExistence type="evidence at protein level"/>
<accession>Q2NKZ1</accession>
<dbReference type="EC" id="3.6.1.-" evidence="2"/>
<dbReference type="EMBL" id="BC111332">
    <property type="protein sequence ID" value="AAI11333.1"/>
    <property type="molecule type" value="mRNA"/>
</dbReference>
<dbReference type="RefSeq" id="NP_001039636.1">
    <property type="nucleotide sequence ID" value="NM_001046171.2"/>
</dbReference>
<dbReference type="PDB" id="3IYG">
    <property type="method" value="EM"/>
    <property type="chains" value="H=10-524"/>
</dbReference>
<dbReference type="PDB" id="4B2T">
    <property type="method" value="X-ray"/>
    <property type="resolution" value="5.50 A"/>
    <property type="chains" value="H/h=1-543"/>
</dbReference>
<dbReference type="PDBsum" id="3IYG"/>
<dbReference type="PDBsum" id="4B2T"/>
<dbReference type="EMDB" id="EMD-50664"/>
<dbReference type="SMR" id="Q2NKZ1"/>
<dbReference type="BioGRID" id="170980">
    <property type="interactions" value="5"/>
</dbReference>
<dbReference type="CORUM" id="Q2NKZ1"/>
<dbReference type="DIP" id="DIP-58621N"/>
<dbReference type="FunCoup" id="Q2NKZ1">
    <property type="interactions" value="4660"/>
</dbReference>
<dbReference type="IntAct" id="Q2NKZ1">
    <property type="interactions" value="5"/>
</dbReference>
<dbReference type="STRING" id="9913.ENSBTAP00000016954"/>
<dbReference type="PaxDb" id="9913-ENSBTAP00000016954"/>
<dbReference type="Ensembl" id="ENSBTAT00000016954.7">
    <property type="protein sequence ID" value="ENSBTAP00000016954.6"/>
    <property type="gene ID" value="ENSBTAG00000012756.7"/>
</dbReference>
<dbReference type="GeneID" id="514355"/>
<dbReference type="KEGG" id="bta:514355"/>
<dbReference type="CTD" id="10574"/>
<dbReference type="VEuPathDB" id="HostDB:ENSBTAG00000012756"/>
<dbReference type="VGNC" id="VGNC:27000">
    <property type="gene designation" value="CCT7"/>
</dbReference>
<dbReference type="eggNOG" id="KOG0361">
    <property type="taxonomic scope" value="Eukaryota"/>
</dbReference>
<dbReference type="GeneTree" id="ENSGT00550000074832"/>
<dbReference type="HOGENOM" id="CLU_008891_7_1_1"/>
<dbReference type="InParanoid" id="Q2NKZ1"/>
<dbReference type="OMA" id="HRKGNTW"/>
<dbReference type="OrthoDB" id="1935484at2759"/>
<dbReference type="BRENDA" id="3.6.4.B10">
    <property type="organism ID" value="908"/>
</dbReference>
<dbReference type="Reactome" id="R-BTA-390471">
    <property type="pathway name" value="Association of TriC/CCT with target proteins during biosynthesis"/>
</dbReference>
<dbReference type="Reactome" id="R-BTA-6814122">
    <property type="pathway name" value="Cooperation of PDCL (PhLP1) and TRiC/CCT in G-protein beta folding"/>
</dbReference>
<dbReference type="Reactome" id="R-BTA-9013418">
    <property type="pathway name" value="RHOBTB2 GTPase cycle"/>
</dbReference>
<dbReference type="Reactome" id="R-BTA-9013422">
    <property type="pathway name" value="RHOBTB1 GTPase cycle"/>
</dbReference>
<dbReference type="EvolutionaryTrace" id="Q2NKZ1"/>
<dbReference type="Proteomes" id="UP000009136">
    <property type="component" value="Chromosome 11"/>
</dbReference>
<dbReference type="Bgee" id="ENSBTAG00000012756">
    <property type="expression patterns" value="Expressed in spermatid and 106 other cell types or tissues"/>
</dbReference>
<dbReference type="GO" id="GO:0044297">
    <property type="term" value="C:cell body"/>
    <property type="evidence" value="ECO:0007669"/>
    <property type="project" value="Ensembl"/>
</dbReference>
<dbReference type="GO" id="GO:0005832">
    <property type="term" value="C:chaperonin-containing T-complex"/>
    <property type="evidence" value="ECO:0000314"/>
    <property type="project" value="UniProtKB"/>
</dbReference>
<dbReference type="GO" id="GO:0005874">
    <property type="term" value="C:microtubule"/>
    <property type="evidence" value="ECO:0007669"/>
    <property type="project" value="Ensembl"/>
</dbReference>
<dbReference type="GO" id="GO:0005524">
    <property type="term" value="F:ATP binding"/>
    <property type="evidence" value="ECO:0007669"/>
    <property type="project" value="UniProtKB-KW"/>
</dbReference>
<dbReference type="GO" id="GO:0016887">
    <property type="term" value="F:ATP hydrolysis activity"/>
    <property type="evidence" value="ECO:0007669"/>
    <property type="project" value="InterPro"/>
</dbReference>
<dbReference type="GO" id="GO:0140662">
    <property type="term" value="F:ATP-dependent protein folding chaperone"/>
    <property type="evidence" value="ECO:0007669"/>
    <property type="project" value="InterPro"/>
</dbReference>
<dbReference type="GO" id="GO:0042802">
    <property type="term" value="F:identical protein binding"/>
    <property type="evidence" value="ECO:0007669"/>
    <property type="project" value="Ensembl"/>
</dbReference>
<dbReference type="GO" id="GO:0051082">
    <property type="term" value="F:unfolded protein binding"/>
    <property type="evidence" value="ECO:0000318"/>
    <property type="project" value="GO_Central"/>
</dbReference>
<dbReference type="GO" id="GO:0007339">
    <property type="term" value="P:binding of sperm to zona pellucida"/>
    <property type="evidence" value="ECO:0007669"/>
    <property type="project" value="Ensembl"/>
</dbReference>
<dbReference type="GO" id="GO:0051086">
    <property type="term" value="P:chaperone mediated protein folding independent of cofactor"/>
    <property type="evidence" value="ECO:0007669"/>
    <property type="project" value="Ensembl"/>
</dbReference>
<dbReference type="GO" id="GO:0032212">
    <property type="term" value="P:positive regulation of telomere maintenance via telomerase"/>
    <property type="evidence" value="ECO:0007669"/>
    <property type="project" value="Ensembl"/>
</dbReference>
<dbReference type="GO" id="GO:0006457">
    <property type="term" value="P:protein folding"/>
    <property type="evidence" value="ECO:0000318"/>
    <property type="project" value="GO_Central"/>
</dbReference>
<dbReference type="GO" id="GO:0050821">
    <property type="term" value="P:protein stabilization"/>
    <property type="evidence" value="ECO:0007669"/>
    <property type="project" value="Ensembl"/>
</dbReference>
<dbReference type="CDD" id="cd03340">
    <property type="entry name" value="TCP1_eta"/>
    <property type="match status" value="1"/>
</dbReference>
<dbReference type="FunFam" id="1.10.560.10:FF:000017">
    <property type="entry name" value="T-complex protein 1 subunit eta"/>
    <property type="match status" value="1"/>
</dbReference>
<dbReference type="FunFam" id="1.10.560.10:FF:000045">
    <property type="entry name" value="T-complex protein 1 subunit eta"/>
    <property type="match status" value="1"/>
</dbReference>
<dbReference type="FunFam" id="3.30.260.10:FF:000022">
    <property type="entry name" value="T-complex protein 1 subunit eta"/>
    <property type="match status" value="1"/>
</dbReference>
<dbReference type="FunFam" id="3.30.260.10:FF:000049">
    <property type="entry name" value="T-complex protein 1 subunit eta"/>
    <property type="match status" value="1"/>
</dbReference>
<dbReference type="FunFam" id="3.50.7.10:FF:000006">
    <property type="entry name" value="T-complex protein 1 subunit eta"/>
    <property type="match status" value="1"/>
</dbReference>
<dbReference type="Gene3D" id="3.50.7.10">
    <property type="entry name" value="GroEL"/>
    <property type="match status" value="1"/>
</dbReference>
<dbReference type="Gene3D" id="1.10.560.10">
    <property type="entry name" value="GroEL-like equatorial domain"/>
    <property type="match status" value="1"/>
</dbReference>
<dbReference type="Gene3D" id="3.30.260.10">
    <property type="entry name" value="TCP-1-like chaperonin intermediate domain"/>
    <property type="match status" value="1"/>
</dbReference>
<dbReference type="InterPro" id="IPR012720">
    <property type="entry name" value="Chap_CCT_eta"/>
</dbReference>
<dbReference type="InterPro" id="IPR017998">
    <property type="entry name" value="Chaperone_TCP-1"/>
</dbReference>
<dbReference type="InterPro" id="IPR002194">
    <property type="entry name" value="Chaperonin_TCP-1_CS"/>
</dbReference>
<dbReference type="InterPro" id="IPR002423">
    <property type="entry name" value="Cpn60/GroEL/TCP-1"/>
</dbReference>
<dbReference type="InterPro" id="IPR027409">
    <property type="entry name" value="GroEL-like_apical_dom_sf"/>
</dbReference>
<dbReference type="InterPro" id="IPR027413">
    <property type="entry name" value="GROEL-like_equatorial_sf"/>
</dbReference>
<dbReference type="InterPro" id="IPR027410">
    <property type="entry name" value="TCP-1-like_intermed_sf"/>
</dbReference>
<dbReference type="InterPro" id="IPR053374">
    <property type="entry name" value="TCP-1_chaperonin"/>
</dbReference>
<dbReference type="InterPro" id="IPR054827">
    <property type="entry name" value="thermosome_alpha"/>
</dbReference>
<dbReference type="NCBIfam" id="TIGR02345">
    <property type="entry name" value="chap_CCT_eta"/>
    <property type="match status" value="1"/>
</dbReference>
<dbReference type="NCBIfam" id="NF041082">
    <property type="entry name" value="thermosome_alpha"/>
    <property type="match status" value="1"/>
</dbReference>
<dbReference type="NCBIfam" id="NF041083">
    <property type="entry name" value="thermosome_beta"/>
    <property type="match status" value="1"/>
</dbReference>
<dbReference type="PANTHER" id="PTHR11353">
    <property type="entry name" value="CHAPERONIN"/>
    <property type="match status" value="1"/>
</dbReference>
<dbReference type="Pfam" id="PF00118">
    <property type="entry name" value="Cpn60_TCP1"/>
    <property type="match status" value="1"/>
</dbReference>
<dbReference type="PRINTS" id="PR00304">
    <property type="entry name" value="TCOMPLEXTCP1"/>
</dbReference>
<dbReference type="SUPFAM" id="SSF52029">
    <property type="entry name" value="GroEL apical domain-like"/>
    <property type="match status" value="1"/>
</dbReference>
<dbReference type="SUPFAM" id="SSF48592">
    <property type="entry name" value="GroEL equatorial domain-like"/>
    <property type="match status" value="1"/>
</dbReference>
<dbReference type="SUPFAM" id="SSF54849">
    <property type="entry name" value="GroEL-intermediate domain like"/>
    <property type="match status" value="1"/>
</dbReference>
<dbReference type="PROSITE" id="PS00750">
    <property type="entry name" value="TCP1_1"/>
    <property type="match status" value="1"/>
</dbReference>
<dbReference type="PROSITE" id="PS00751">
    <property type="entry name" value="TCP1_2"/>
    <property type="match status" value="1"/>
</dbReference>
<dbReference type="PROSITE" id="PS00995">
    <property type="entry name" value="TCP1_3"/>
    <property type="match status" value="1"/>
</dbReference>
<evidence type="ECO:0000250" key="1">
    <source>
        <dbReference type="UniProtKB" id="P80313"/>
    </source>
</evidence>
<evidence type="ECO:0000250" key="2">
    <source>
        <dbReference type="UniProtKB" id="Q99832"/>
    </source>
</evidence>
<evidence type="ECO:0000256" key="3">
    <source>
        <dbReference type="SAM" id="MobiDB-lite"/>
    </source>
</evidence>
<evidence type="ECO:0000305" key="4"/>
<comment type="function">
    <text evidence="2">Component of the chaperonin-containing T-complex (TRiC), a molecular chaperone complex that assists the folding of actin, tubulin and other proteins upon ATP hydrolysis. The TRiC complex mediates the folding of WRAP53/TCAB1, thereby regulating telomere maintenance.</text>
</comment>
<comment type="catalytic activity">
    <reaction evidence="2">
        <text>ATP + H2O = ADP + phosphate + H(+)</text>
        <dbReference type="Rhea" id="RHEA:13065"/>
        <dbReference type="ChEBI" id="CHEBI:15377"/>
        <dbReference type="ChEBI" id="CHEBI:15378"/>
        <dbReference type="ChEBI" id="CHEBI:30616"/>
        <dbReference type="ChEBI" id="CHEBI:43474"/>
        <dbReference type="ChEBI" id="CHEBI:456216"/>
    </reaction>
</comment>
<comment type="subunit">
    <text evidence="2">Component of the chaperonin-containing T-complex (TRiC), a hexadecamer composed of two identical back-to-back stacked rings enclosing a protein folding chamber. Each ring is made up of eight different subunits: TCP1/CCT1, CCT2, CCT3, CCT4, CCT5, CCT6A/CCT6, CCT7, CCT8. Interacts with PACRG. Interacts with DLEC1.</text>
</comment>
<comment type="interaction">
    <interactant intactId="EBI-9014155">
        <id>Q2NKZ1</id>
    </interactant>
    <interactant intactId="EBI-15839846">
        <id>F1MWD3</id>
        <label>CCT5</label>
    </interactant>
    <organismsDiffer>false</organismsDiffer>
    <experiments>6</experiments>
</comment>
<comment type="subcellular location">
    <subcellularLocation>
        <location evidence="1">Cytoplasm</location>
    </subcellularLocation>
</comment>
<comment type="similarity">
    <text evidence="4">Belongs to the TCP-1 chaperonin family.</text>
</comment>
<sequence length="543" mass="59443">MMPTPVILLKEGTDSSQGIPQLVSNISACQVIAEAVRTTLGPRGMDKLIVDGRGKATISNDGATILKLLDVVHPAAKTLVDIAKSQDAEVGDGTTSVTLLAAEFLKQVKPYVEEGLHPQIIIRAFRTATQLAVNKIKEIAVTVKKEDKVEQRKLLEKCAMTALSSKLISQQKAFFAKMVVDAVMMLDDLLQLKMIGIKKVQGGALEESQLVAGVAFKKTFSYAGFEMQPKKYHNPMIALLNVELELKAEKDNAEIRVHTVEDYQAIVDAEWNILYDKLEKIHHSGAKVVLSKLPIGDVATQYFADRDMFCAGRVPEEDLKRTMMACGGSIQTSVNALSSDVLGRCQVFEETQIGGERYNFFTGCPKAKTCTIILRGGAEQFMEETERSLHDAIMIVRRAIKNDSVVAGGGAIEMELSKYLRDYSRTIPGKQQLLIGAYAKALEIIPRQLCDNAGFDATNILNKLRARHAQGGMWYGVDINTEDIADNFEAFVWEPAMVRINALTAASEAACLIVSVDETIKNPRSTVDASPAAGRGRGRGRLH</sequence>
<feature type="chain" id="PRO_0000236264" description="T-complex protein 1 subunit eta">
    <location>
        <begin position="1"/>
        <end position="543"/>
    </location>
</feature>
<feature type="region of interest" description="Disordered" evidence="3">
    <location>
        <begin position="524"/>
        <end position="543"/>
    </location>
</feature>
<feature type="binding site" evidence="2">
    <location>
        <position position="41"/>
    </location>
    <ligand>
        <name>ADP</name>
        <dbReference type="ChEBI" id="CHEBI:456216"/>
    </ligand>
</feature>
<feature type="binding site" evidence="2">
    <location>
        <position position="41"/>
    </location>
    <ligand>
        <name>ATP</name>
        <dbReference type="ChEBI" id="CHEBI:30616"/>
    </ligand>
</feature>
<feature type="binding site" evidence="2">
    <location>
        <position position="92"/>
    </location>
    <ligand>
        <name>Mg(2+)</name>
        <dbReference type="ChEBI" id="CHEBI:18420"/>
    </ligand>
</feature>
<feature type="binding site" evidence="2">
    <location>
        <position position="93"/>
    </location>
    <ligand>
        <name>ADP</name>
        <dbReference type="ChEBI" id="CHEBI:456216"/>
    </ligand>
</feature>
<feature type="binding site" evidence="2">
    <location>
        <position position="93"/>
    </location>
    <ligand>
        <name>ATP</name>
        <dbReference type="ChEBI" id="CHEBI:30616"/>
    </ligand>
</feature>
<feature type="binding site" evidence="2">
    <location>
        <position position="94"/>
    </location>
    <ligand>
        <name>ADP</name>
        <dbReference type="ChEBI" id="CHEBI:456216"/>
    </ligand>
</feature>
<feature type="binding site" evidence="2">
    <location>
        <position position="95"/>
    </location>
    <ligand>
        <name>ADP</name>
        <dbReference type="ChEBI" id="CHEBI:456216"/>
    </ligand>
</feature>
<feature type="binding site" evidence="2">
    <location>
        <position position="96"/>
    </location>
    <ligand>
        <name>ADP</name>
        <dbReference type="ChEBI" id="CHEBI:456216"/>
    </ligand>
</feature>
<feature type="binding site" evidence="2">
    <location>
        <position position="96"/>
    </location>
    <ligand>
        <name>ATP</name>
        <dbReference type="ChEBI" id="CHEBI:30616"/>
    </ligand>
</feature>
<feature type="binding site" evidence="2">
    <location>
        <position position="164"/>
    </location>
    <ligand>
        <name>ADP</name>
        <dbReference type="ChEBI" id="CHEBI:456216"/>
    </ligand>
</feature>
<feature type="binding site" evidence="2">
    <location>
        <position position="165"/>
    </location>
    <ligand>
        <name>ADP</name>
        <dbReference type="ChEBI" id="CHEBI:456216"/>
    </ligand>
</feature>
<feature type="binding site" evidence="2">
    <location>
        <position position="398"/>
    </location>
    <ligand>
        <name>ATP</name>
        <dbReference type="ChEBI" id="CHEBI:30616"/>
    </ligand>
</feature>
<feature type="binding site" evidence="2">
    <location>
        <position position="409"/>
    </location>
    <ligand>
        <name>ADP</name>
        <dbReference type="ChEBI" id="CHEBI:456216"/>
    </ligand>
</feature>
<feature type="binding site" evidence="2">
    <location>
        <position position="409"/>
    </location>
    <ligand>
        <name>ATP</name>
        <dbReference type="ChEBI" id="CHEBI:30616"/>
    </ligand>
</feature>
<feature type="binding site" evidence="2">
    <location>
        <position position="494"/>
    </location>
    <ligand>
        <name>ADP</name>
        <dbReference type="ChEBI" id="CHEBI:456216"/>
    </ligand>
</feature>
<feature type="binding site" evidence="2">
    <location>
        <position position="499"/>
    </location>
    <ligand>
        <name>ADP</name>
        <dbReference type="ChEBI" id="CHEBI:456216"/>
    </ligand>
</feature>
<feature type="binding site" evidence="2">
    <location>
        <position position="499"/>
    </location>
    <ligand>
        <name>ATP</name>
        <dbReference type="ChEBI" id="CHEBI:30616"/>
    </ligand>
</feature>
<feature type="modified residue" description="N-acetylmethionine" evidence="2">
    <location>
        <position position="1"/>
    </location>
</feature>
<feature type="modified residue" description="N6-acetyllysine" evidence="2">
    <location>
        <position position="67"/>
    </location>
</feature>
<feature type="modified residue" description="N6-acetyllysine" evidence="1">
    <location>
        <position position="250"/>
    </location>
</feature>
<feature type="modified residue" description="N6-acetyllysine" evidence="2">
    <location>
        <position position="320"/>
    </location>
</feature>
<feature type="modified residue" description="Omega-N-methylarginine" evidence="2">
    <location>
        <position position="535"/>
    </location>
</feature>
<feature type="cross-link" description="Glycyl lysine isopeptide (Lys-Gly) (interchain with G-Cter in SUMO2)" evidence="2">
    <location>
        <position position="430"/>
    </location>
</feature>
<protein>
    <recommendedName>
        <fullName>T-complex protein 1 subunit eta</fullName>
        <shortName>TCP-1-eta</shortName>
        <ecNumber evidence="2">3.6.1.-</ecNumber>
    </recommendedName>
    <alternativeName>
        <fullName>CCT-eta</fullName>
    </alternativeName>
</protein>
<keyword id="KW-0002">3D-structure</keyword>
<keyword id="KW-0007">Acetylation</keyword>
<keyword id="KW-0067">ATP-binding</keyword>
<keyword id="KW-0143">Chaperone</keyword>
<keyword id="KW-0963">Cytoplasm</keyword>
<keyword id="KW-0378">Hydrolase</keyword>
<keyword id="KW-1017">Isopeptide bond</keyword>
<keyword id="KW-0460">Magnesium</keyword>
<keyword id="KW-0479">Metal-binding</keyword>
<keyword id="KW-0488">Methylation</keyword>
<keyword id="KW-0547">Nucleotide-binding</keyword>
<keyword id="KW-1185">Reference proteome</keyword>
<keyword id="KW-0832">Ubl conjugation</keyword>
<name>TCPH_BOVIN</name>